<feature type="chain" id="PRO_1000146685" description="Formate--tetrahydrofolate ligase">
    <location>
        <begin position="1"/>
        <end position="570"/>
    </location>
</feature>
<feature type="binding site" evidence="1">
    <location>
        <begin position="65"/>
        <end position="72"/>
    </location>
    <ligand>
        <name>ATP</name>
        <dbReference type="ChEBI" id="CHEBI:30616"/>
    </ligand>
</feature>
<proteinExistence type="inferred from homology"/>
<keyword id="KW-0067">ATP-binding</keyword>
<keyword id="KW-0436">Ligase</keyword>
<keyword id="KW-0547">Nucleotide-binding</keyword>
<keyword id="KW-0554">One-carbon metabolism</keyword>
<gene>
    <name evidence="1" type="primary">fhs</name>
    <name type="ordered locus">Haur_1499</name>
</gene>
<comment type="catalytic activity">
    <reaction evidence="1">
        <text>(6S)-5,6,7,8-tetrahydrofolate + formate + ATP = (6R)-10-formyltetrahydrofolate + ADP + phosphate</text>
        <dbReference type="Rhea" id="RHEA:20221"/>
        <dbReference type="ChEBI" id="CHEBI:15740"/>
        <dbReference type="ChEBI" id="CHEBI:30616"/>
        <dbReference type="ChEBI" id="CHEBI:43474"/>
        <dbReference type="ChEBI" id="CHEBI:57453"/>
        <dbReference type="ChEBI" id="CHEBI:195366"/>
        <dbReference type="ChEBI" id="CHEBI:456216"/>
        <dbReference type="EC" id="6.3.4.3"/>
    </reaction>
</comment>
<comment type="pathway">
    <text evidence="1">One-carbon metabolism; tetrahydrofolate interconversion.</text>
</comment>
<comment type="similarity">
    <text evidence="1">Belongs to the formate--tetrahydrofolate ligase family.</text>
</comment>
<reference key="1">
    <citation type="journal article" date="2011" name="Stand. Genomic Sci.">
        <title>Complete genome sequence of the filamentous gliding predatory bacterium Herpetosiphon aurantiacus type strain (114-95(T)).</title>
        <authorList>
            <person name="Kiss H."/>
            <person name="Nett M."/>
            <person name="Domin N."/>
            <person name="Martin K."/>
            <person name="Maresca J.A."/>
            <person name="Copeland A."/>
            <person name="Lapidus A."/>
            <person name="Lucas S."/>
            <person name="Berry K.W."/>
            <person name="Glavina Del Rio T."/>
            <person name="Dalin E."/>
            <person name="Tice H."/>
            <person name="Pitluck S."/>
            <person name="Richardson P."/>
            <person name="Bruce D."/>
            <person name="Goodwin L."/>
            <person name="Han C."/>
            <person name="Detter J.C."/>
            <person name="Schmutz J."/>
            <person name="Brettin T."/>
            <person name="Land M."/>
            <person name="Hauser L."/>
            <person name="Kyrpides N.C."/>
            <person name="Ivanova N."/>
            <person name="Goeker M."/>
            <person name="Woyke T."/>
            <person name="Klenk H.P."/>
            <person name="Bryant D.A."/>
        </authorList>
    </citation>
    <scope>NUCLEOTIDE SEQUENCE [LARGE SCALE GENOMIC DNA]</scope>
    <source>
        <strain>ATCC 23779 / DSM 785 / 114-95</strain>
    </source>
</reference>
<evidence type="ECO:0000255" key="1">
    <source>
        <dbReference type="HAMAP-Rule" id="MF_01543"/>
    </source>
</evidence>
<protein>
    <recommendedName>
        <fullName evidence="1">Formate--tetrahydrofolate ligase</fullName>
        <ecNumber evidence="1">6.3.4.3</ecNumber>
    </recommendedName>
    <alternativeName>
        <fullName evidence="1">Formyltetrahydrofolate synthetase</fullName>
        <shortName evidence="1">FHS</shortName>
        <shortName evidence="1">FTHFS</shortName>
    </alternativeName>
</protein>
<accession>A9B4H8</accession>
<organism>
    <name type="scientific">Herpetosiphon aurantiacus (strain ATCC 23779 / DSM 785 / 114-95)</name>
    <dbReference type="NCBI Taxonomy" id="316274"/>
    <lineage>
        <taxon>Bacteria</taxon>
        <taxon>Bacillati</taxon>
        <taxon>Chloroflexota</taxon>
        <taxon>Chloroflexia</taxon>
        <taxon>Herpetosiphonales</taxon>
        <taxon>Herpetosiphonaceae</taxon>
        <taxon>Herpetosiphon</taxon>
    </lineage>
</organism>
<sequence length="570" mass="60778">MKTSLQIAAEATPRPITQIAEELAIAEQFVEPYGRYRAKINLDLLDASHDRPRGKQILVTAMTPTPLGEGKTATTIGLGMALSRLGKRAICTLRQSSLGPVFGIKGGGSGGGYSQVIPLEDSLMHLTGDIHAVTQAHNQIAAMTDNSWYQKNRLGIDPEQIQIRRVLDVNDRFLRSITIGQGGSQHGIPRQTGFDITAASELMAILALVSGENHADVMRDLRQRIGRMVVAFTRQGQPITADDIQAAGAATVIMRNAIHPTLMQTIENTPVLMHGGPFANIAHGNASVVADQVGLRIADYVVTEAGFAMDMGGEKFFDIKCRAFDAKPAVVVLVATIRALKAHSGRWNIKPGRDLPTDLLQENPDAVYAGGANLQKHIRNAQLFGLPVVVALNSFPDDHPSEIEAVREIAMSAGAFDVAVSKVFSQGGVGGEELAEKVLAAIDQAGQAQFLYELEQPLTAKIATIATKIYGAAEVSYSEAASEQLAKLEANGFGNLPICMAKTHLSISHDPALKGAPTGYSFPIREVRASIGAGFIYPIAGDMMTMPGLSANPAAQQIDIDEHGNTVGLF</sequence>
<dbReference type="EC" id="6.3.4.3" evidence="1"/>
<dbReference type="EMBL" id="CP000875">
    <property type="protein sequence ID" value="ABX04143.1"/>
    <property type="molecule type" value="Genomic_DNA"/>
</dbReference>
<dbReference type="SMR" id="A9B4H8"/>
<dbReference type="STRING" id="316274.Haur_1499"/>
<dbReference type="KEGG" id="hau:Haur_1499"/>
<dbReference type="eggNOG" id="COG2759">
    <property type="taxonomic scope" value="Bacteria"/>
</dbReference>
<dbReference type="HOGENOM" id="CLU_003601_3_3_0"/>
<dbReference type="InParanoid" id="A9B4H8"/>
<dbReference type="UniPathway" id="UPA00193"/>
<dbReference type="Proteomes" id="UP000000787">
    <property type="component" value="Chromosome"/>
</dbReference>
<dbReference type="GO" id="GO:0005524">
    <property type="term" value="F:ATP binding"/>
    <property type="evidence" value="ECO:0007669"/>
    <property type="project" value="UniProtKB-UniRule"/>
</dbReference>
<dbReference type="GO" id="GO:0004329">
    <property type="term" value="F:formate-tetrahydrofolate ligase activity"/>
    <property type="evidence" value="ECO:0007669"/>
    <property type="project" value="UniProtKB-UniRule"/>
</dbReference>
<dbReference type="GO" id="GO:0035999">
    <property type="term" value="P:tetrahydrofolate interconversion"/>
    <property type="evidence" value="ECO:0007669"/>
    <property type="project" value="UniProtKB-UniRule"/>
</dbReference>
<dbReference type="CDD" id="cd00477">
    <property type="entry name" value="FTHFS"/>
    <property type="match status" value="1"/>
</dbReference>
<dbReference type="FunFam" id="3.30.1510.10:FF:000009">
    <property type="entry name" value="Formate--tetrahydrofolate ligase"/>
    <property type="match status" value="1"/>
</dbReference>
<dbReference type="FunFam" id="3.10.410.10:FF:000001">
    <property type="entry name" value="Putative formate--tetrahydrofolate ligase"/>
    <property type="match status" value="1"/>
</dbReference>
<dbReference type="Gene3D" id="3.30.1510.10">
    <property type="entry name" value="Domain 2, N(10)-formyltetrahydrofolate synthetase"/>
    <property type="match status" value="1"/>
</dbReference>
<dbReference type="Gene3D" id="3.10.410.10">
    <property type="entry name" value="Formyltetrahydrofolate synthetase, domain 3"/>
    <property type="match status" value="1"/>
</dbReference>
<dbReference type="Gene3D" id="3.40.50.300">
    <property type="entry name" value="P-loop containing nucleotide triphosphate hydrolases"/>
    <property type="match status" value="1"/>
</dbReference>
<dbReference type="HAMAP" id="MF_01543">
    <property type="entry name" value="FTHFS"/>
    <property type="match status" value="1"/>
</dbReference>
<dbReference type="InterPro" id="IPR000559">
    <property type="entry name" value="Formate_THF_ligase"/>
</dbReference>
<dbReference type="InterPro" id="IPR020628">
    <property type="entry name" value="Formate_THF_ligase_CS"/>
</dbReference>
<dbReference type="InterPro" id="IPR027417">
    <property type="entry name" value="P-loop_NTPase"/>
</dbReference>
<dbReference type="NCBIfam" id="NF010030">
    <property type="entry name" value="PRK13505.1"/>
    <property type="match status" value="1"/>
</dbReference>
<dbReference type="Pfam" id="PF01268">
    <property type="entry name" value="FTHFS"/>
    <property type="match status" value="1"/>
</dbReference>
<dbReference type="SUPFAM" id="SSF52540">
    <property type="entry name" value="P-loop containing nucleoside triphosphate hydrolases"/>
    <property type="match status" value="1"/>
</dbReference>
<dbReference type="PROSITE" id="PS00721">
    <property type="entry name" value="FTHFS_1"/>
    <property type="match status" value="1"/>
</dbReference>
<dbReference type="PROSITE" id="PS00722">
    <property type="entry name" value="FTHFS_2"/>
    <property type="match status" value="1"/>
</dbReference>
<name>FTHS_HERA2</name>